<feature type="chain" id="PRO_1000149363" description="3-isopropylmalate dehydratase large subunit">
    <location>
        <begin position="1"/>
        <end position="466"/>
    </location>
</feature>
<feature type="binding site" evidence="1">
    <location>
        <position position="347"/>
    </location>
    <ligand>
        <name>[4Fe-4S] cluster</name>
        <dbReference type="ChEBI" id="CHEBI:49883"/>
    </ligand>
</feature>
<feature type="binding site" evidence="1">
    <location>
        <position position="407"/>
    </location>
    <ligand>
        <name>[4Fe-4S] cluster</name>
        <dbReference type="ChEBI" id="CHEBI:49883"/>
    </ligand>
</feature>
<feature type="binding site" evidence="1">
    <location>
        <position position="410"/>
    </location>
    <ligand>
        <name>[4Fe-4S] cluster</name>
        <dbReference type="ChEBI" id="CHEBI:49883"/>
    </ligand>
</feature>
<protein>
    <recommendedName>
        <fullName evidence="1">3-isopropylmalate dehydratase large subunit</fullName>
        <ecNumber evidence="1">4.2.1.33</ecNumber>
    </recommendedName>
    <alternativeName>
        <fullName evidence="1">Alpha-IPM isomerase</fullName>
        <shortName evidence="1">IPMI</shortName>
    </alternativeName>
    <alternativeName>
        <fullName evidence="1">Isopropylmalate isomerase</fullName>
    </alternativeName>
</protein>
<proteinExistence type="inferred from homology"/>
<dbReference type="EC" id="4.2.1.33" evidence="1"/>
<dbReference type="EMBL" id="CU928162">
    <property type="protein sequence ID" value="CAR06295.1"/>
    <property type="molecule type" value="Genomic_DNA"/>
</dbReference>
<dbReference type="RefSeq" id="WP_001140652.1">
    <property type="nucleotide sequence ID" value="NC_011745.1"/>
</dbReference>
<dbReference type="SMR" id="B7MNT0"/>
<dbReference type="GeneID" id="75202111"/>
<dbReference type="KEGG" id="ecq:ECED1_0072"/>
<dbReference type="HOGENOM" id="CLU_006714_3_4_6"/>
<dbReference type="UniPathway" id="UPA00048">
    <property type="reaction ID" value="UER00071"/>
</dbReference>
<dbReference type="Proteomes" id="UP000000748">
    <property type="component" value="Chromosome"/>
</dbReference>
<dbReference type="GO" id="GO:0003861">
    <property type="term" value="F:3-isopropylmalate dehydratase activity"/>
    <property type="evidence" value="ECO:0007669"/>
    <property type="project" value="UniProtKB-UniRule"/>
</dbReference>
<dbReference type="GO" id="GO:0051539">
    <property type="term" value="F:4 iron, 4 sulfur cluster binding"/>
    <property type="evidence" value="ECO:0007669"/>
    <property type="project" value="UniProtKB-KW"/>
</dbReference>
<dbReference type="GO" id="GO:0046872">
    <property type="term" value="F:metal ion binding"/>
    <property type="evidence" value="ECO:0007669"/>
    <property type="project" value="UniProtKB-KW"/>
</dbReference>
<dbReference type="GO" id="GO:0009098">
    <property type="term" value="P:L-leucine biosynthetic process"/>
    <property type="evidence" value="ECO:0007669"/>
    <property type="project" value="UniProtKB-UniRule"/>
</dbReference>
<dbReference type="CDD" id="cd01583">
    <property type="entry name" value="IPMI"/>
    <property type="match status" value="1"/>
</dbReference>
<dbReference type="FunFam" id="3.30.499.10:FF:000006">
    <property type="entry name" value="3-isopropylmalate dehydratase large subunit"/>
    <property type="match status" value="1"/>
</dbReference>
<dbReference type="FunFam" id="3.30.499.10:FF:000007">
    <property type="entry name" value="3-isopropylmalate dehydratase large subunit"/>
    <property type="match status" value="1"/>
</dbReference>
<dbReference type="Gene3D" id="3.30.499.10">
    <property type="entry name" value="Aconitase, domain 3"/>
    <property type="match status" value="2"/>
</dbReference>
<dbReference type="HAMAP" id="MF_01026">
    <property type="entry name" value="LeuC_type1"/>
    <property type="match status" value="1"/>
</dbReference>
<dbReference type="InterPro" id="IPR004430">
    <property type="entry name" value="3-IsopropMal_deHydase_lsu"/>
</dbReference>
<dbReference type="InterPro" id="IPR015931">
    <property type="entry name" value="Acnase/IPM_dHydase_lsu_aba_1/3"/>
</dbReference>
<dbReference type="InterPro" id="IPR001030">
    <property type="entry name" value="Acoase/IPM_deHydtase_lsu_aba"/>
</dbReference>
<dbReference type="InterPro" id="IPR018136">
    <property type="entry name" value="Aconitase_4Fe-4S_BS"/>
</dbReference>
<dbReference type="InterPro" id="IPR036008">
    <property type="entry name" value="Aconitase_4Fe-4S_dom"/>
</dbReference>
<dbReference type="InterPro" id="IPR050067">
    <property type="entry name" value="IPM_dehydratase_rel_enz"/>
</dbReference>
<dbReference type="InterPro" id="IPR033941">
    <property type="entry name" value="IPMI_cat"/>
</dbReference>
<dbReference type="NCBIfam" id="TIGR00170">
    <property type="entry name" value="leuC"/>
    <property type="match status" value="1"/>
</dbReference>
<dbReference type="NCBIfam" id="NF004016">
    <property type="entry name" value="PRK05478.1"/>
    <property type="match status" value="1"/>
</dbReference>
<dbReference type="NCBIfam" id="NF009116">
    <property type="entry name" value="PRK12466.1"/>
    <property type="match status" value="1"/>
</dbReference>
<dbReference type="PANTHER" id="PTHR43822:SF9">
    <property type="entry name" value="3-ISOPROPYLMALATE DEHYDRATASE"/>
    <property type="match status" value="1"/>
</dbReference>
<dbReference type="PANTHER" id="PTHR43822">
    <property type="entry name" value="HOMOACONITASE, MITOCHONDRIAL-RELATED"/>
    <property type="match status" value="1"/>
</dbReference>
<dbReference type="Pfam" id="PF00330">
    <property type="entry name" value="Aconitase"/>
    <property type="match status" value="1"/>
</dbReference>
<dbReference type="PRINTS" id="PR00415">
    <property type="entry name" value="ACONITASE"/>
</dbReference>
<dbReference type="SUPFAM" id="SSF53732">
    <property type="entry name" value="Aconitase iron-sulfur domain"/>
    <property type="match status" value="1"/>
</dbReference>
<dbReference type="PROSITE" id="PS00450">
    <property type="entry name" value="ACONITASE_1"/>
    <property type="match status" value="1"/>
</dbReference>
<dbReference type="PROSITE" id="PS01244">
    <property type="entry name" value="ACONITASE_2"/>
    <property type="match status" value="1"/>
</dbReference>
<sequence length="466" mass="49882">MAKTLYEKLFDAHVVYEAENETPLLYIDRHLVHEVTSPQAFDGLRAHGRPVRQPGKTFATMDHNVSTQTKDINACGEMARIQMQELIKNCKEFGVELYDLNHPYQGIVHVMGPEQGVTLPGMTIVCGDSHTATHGAFGALAFGIGTSEVEHVLATQTLKQGRAKTMKIEVQGKAAPGITAKDIVLAIIGKTGSAGGTGHVVEFCGEAIRDLSMEGRMTLCNMAIEMGAKAGLVAPDETTFNYVKGRLHAPKGKDFDDAVAYWKTLQTDEGATFDTVVTLQAEEISPQVTWGTNPGQVISVNDNIPDPASFADPVERASAEKALAYMGLKPGIPLTEVAIDKVFIGSCTNSRIEDLRAAAEIAKGRKVAPGVQALVVPGSGPVKAQAEAEGLDKIFIEAGFEWRLPGCSMCLAMNNDRLNPGERCASTSNRNFEGRQGRGGRTHLVSPAMAAAAAVTGHFADIRNIK</sequence>
<evidence type="ECO:0000255" key="1">
    <source>
        <dbReference type="HAMAP-Rule" id="MF_01026"/>
    </source>
</evidence>
<comment type="function">
    <text evidence="1">Catalyzes the isomerization between 2-isopropylmalate and 3-isopropylmalate, via the formation of 2-isopropylmaleate.</text>
</comment>
<comment type="catalytic activity">
    <reaction evidence="1">
        <text>(2R,3S)-3-isopropylmalate = (2S)-2-isopropylmalate</text>
        <dbReference type="Rhea" id="RHEA:32287"/>
        <dbReference type="ChEBI" id="CHEBI:1178"/>
        <dbReference type="ChEBI" id="CHEBI:35121"/>
        <dbReference type="EC" id="4.2.1.33"/>
    </reaction>
</comment>
<comment type="cofactor">
    <cofactor evidence="1">
        <name>[4Fe-4S] cluster</name>
        <dbReference type="ChEBI" id="CHEBI:49883"/>
    </cofactor>
    <text evidence="1">Binds 1 [4Fe-4S] cluster per subunit.</text>
</comment>
<comment type="pathway">
    <text evidence="1">Amino-acid biosynthesis; L-leucine biosynthesis; L-leucine from 3-methyl-2-oxobutanoate: step 2/4.</text>
</comment>
<comment type="subunit">
    <text evidence="1">Heterodimer of LeuC and LeuD.</text>
</comment>
<comment type="similarity">
    <text evidence="1">Belongs to the aconitase/IPM isomerase family. LeuC type 1 subfamily.</text>
</comment>
<reference key="1">
    <citation type="journal article" date="2009" name="PLoS Genet.">
        <title>Organised genome dynamics in the Escherichia coli species results in highly diverse adaptive paths.</title>
        <authorList>
            <person name="Touchon M."/>
            <person name="Hoede C."/>
            <person name="Tenaillon O."/>
            <person name="Barbe V."/>
            <person name="Baeriswyl S."/>
            <person name="Bidet P."/>
            <person name="Bingen E."/>
            <person name="Bonacorsi S."/>
            <person name="Bouchier C."/>
            <person name="Bouvet O."/>
            <person name="Calteau A."/>
            <person name="Chiapello H."/>
            <person name="Clermont O."/>
            <person name="Cruveiller S."/>
            <person name="Danchin A."/>
            <person name="Diard M."/>
            <person name="Dossat C."/>
            <person name="Karoui M.E."/>
            <person name="Frapy E."/>
            <person name="Garry L."/>
            <person name="Ghigo J.M."/>
            <person name="Gilles A.M."/>
            <person name="Johnson J."/>
            <person name="Le Bouguenec C."/>
            <person name="Lescat M."/>
            <person name="Mangenot S."/>
            <person name="Martinez-Jehanne V."/>
            <person name="Matic I."/>
            <person name="Nassif X."/>
            <person name="Oztas S."/>
            <person name="Petit M.A."/>
            <person name="Pichon C."/>
            <person name="Rouy Z."/>
            <person name="Ruf C.S."/>
            <person name="Schneider D."/>
            <person name="Tourret J."/>
            <person name="Vacherie B."/>
            <person name="Vallenet D."/>
            <person name="Medigue C."/>
            <person name="Rocha E.P.C."/>
            <person name="Denamur E."/>
        </authorList>
    </citation>
    <scope>NUCLEOTIDE SEQUENCE [LARGE SCALE GENOMIC DNA]</scope>
    <source>
        <strain>ED1a</strain>
    </source>
</reference>
<keyword id="KW-0004">4Fe-4S</keyword>
<keyword id="KW-0028">Amino-acid biosynthesis</keyword>
<keyword id="KW-0100">Branched-chain amino acid biosynthesis</keyword>
<keyword id="KW-0408">Iron</keyword>
<keyword id="KW-0411">Iron-sulfur</keyword>
<keyword id="KW-0432">Leucine biosynthesis</keyword>
<keyword id="KW-0456">Lyase</keyword>
<keyword id="KW-0479">Metal-binding</keyword>
<name>LEUC_ECO81</name>
<accession>B7MNT0</accession>
<organism>
    <name type="scientific">Escherichia coli O81 (strain ED1a)</name>
    <dbReference type="NCBI Taxonomy" id="585397"/>
    <lineage>
        <taxon>Bacteria</taxon>
        <taxon>Pseudomonadati</taxon>
        <taxon>Pseudomonadota</taxon>
        <taxon>Gammaproteobacteria</taxon>
        <taxon>Enterobacterales</taxon>
        <taxon>Enterobacteriaceae</taxon>
        <taxon>Escherichia</taxon>
    </lineage>
</organism>
<gene>
    <name evidence="1" type="primary">leuC</name>
    <name type="ordered locus">ECED1_0072</name>
</gene>